<name>DEOD_SHIFL</name>
<feature type="chain" id="PRO_0000063164" description="Purine nucleoside phosphorylase DeoD-type">
    <location>
        <begin position="1"/>
        <end position="239"/>
    </location>
</feature>
<feature type="active site" description="Proton donor" evidence="2">
    <location>
        <position position="205"/>
    </location>
</feature>
<feature type="binding site" evidence="1">
    <location>
        <position position="5"/>
    </location>
    <ligand>
        <name>a purine D-ribonucleoside</name>
        <dbReference type="ChEBI" id="CHEBI:142355"/>
        <note>ligand shared between dimeric partners</note>
    </ligand>
</feature>
<feature type="binding site" description="in other chain" evidence="1">
    <location>
        <position position="21"/>
    </location>
    <ligand>
        <name>phosphate</name>
        <dbReference type="ChEBI" id="CHEBI:43474"/>
        <note>ligand shared between dimeric partners</note>
    </ligand>
</feature>
<feature type="binding site" description="in other chain" evidence="1">
    <location>
        <position position="25"/>
    </location>
    <ligand>
        <name>phosphate</name>
        <dbReference type="ChEBI" id="CHEBI:43474"/>
        <note>ligand shared between dimeric partners</note>
    </ligand>
</feature>
<feature type="binding site" evidence="1">
    <location>
        <position position="44"/>
    </location>
    <ligand>
        <name>phosphate</name>
        <dbReference type="ChEBI" id="CHEBI:43474"/>
        <note>ligand shared between dimeric partners</note>
    </ligand>
</feature>
<feature type="binding site" description="in other chain" evidence="1">
    <location>
        <begin position="88"/>
        <end position="91"/>
    </location>
    <ligand>
        <name>phosphate</name>
        <dbReference type="ChEBI" id="CHEBI:43474"/>
        <note>ligand shared between dimeric partners</note>
    </ligand>
</feature>
<feature type="binding site" description="in other chain" evidence="1">
    <location>
        <begin position="180"/>
        <end position="182"/>
    </location>
    <ligand>
        <name>a purine D-ribonucleoside</name>
        <dbReference type="ChEBI" id="CHEBI:142355"/>
        <note>ligand shared between dimeric partners</note>
    </ligand>
</feature>
<feature type="binding site" description="in other chain" evidence="1">
    <location>
        <begin position="204"/>
        <end position="205"/>
    </location>
    <ligand>
        <name>a purine D-ribonucleoside</name>
        <dbReference type="ChEBI" id="CHEBI:142355"/>
        <note>ligand shared between dimeric partners</note>
    </ligand>
</feature>
<feature type="site" description="Important for catalytic activity" evidence="2">
    <location>
        <position position="218"/>
    </location>
</feature>
<feature type="modified residue" description="N6-acetyllysine" evidence="2">
    <location>
        <position position="27"/>
    </location>
</feature>
<evidence type="ECO:0000250" key="1">
    <source>
        <dbReference type="UniProtKB" id="P50389"/>
    </source>
</evidence>
<evidence type="ECO:0000255" key="2">
    <source>
        <dbReference type="HAMAP-Rule" id="MF_01627"/>
    </source>
</evidence>
<organism>
    <name type="scientific">Shigella flexneri</name>
    <dbReference type="NCBI Taxonomy" id="623"/>
    <lineage>
        <taxon>Bacteria</taxon>
        <taxon>Pseudomonadati</taxon>
        <taxon>Pseudomonadota</taxon>
        <taxon>Gammaproteobacteria</taxon>
        <taxon>Enterobacterales</taxon>
        <taxon>Enterobacteriaceae</taxon>
        <taxon>Shigella</taxon>
    </lineage>
</organism>
<gene>
    <name evidence="2" type="primary">deoD</name>
    <name type="ordered locus">SF4416</name>
    <name type="ordered locus">S4687</name>
</gene>
<accession>Q83P00</accession>
<accession>Q7UAI6</accession>
<keyword id="KW-0007">Acetylation</keyword>
<keyword id="KW-0328">Glycosyltransferase</keyword>
<keyword id="KW-1185">Reference proteome</keyword>
<keyword id="KW-0808">Transferase</keyword>
<dbReference type="EC" id="2.4.2.1" evidence="2"/>
<dbReference type="EMBL" id="AE005674">
    <property type="protein sequence ID" value="AAN45831.2"/>
    <property type="molecule type" value="Genomic_DNA"/>
</dbReference>
<dbReference type="EMBL" id="AE014073">
    <property type="protein sequence ID" value="AAP19605.1"/>
    <property type="molecule type" value="Genomic_DNA"/>
</dbReference>
<dbReference type="RefSeq" id="NP_710124.2">
    <property type="nucleotide sequence ID" value="NC_004337.2"/>
</dbReference>
<dbReference type="RefSeq" id="WP_000224879.1">
    <property type="nucleotide sequence ID" value="NZ_WPGW01000013.1"/>
</dbReference>
<dbReference type="SMR" id="Q83P00"/>
<dbReference type="STRING" id="198214.SF4416"/>
<dbReference type="PaxDb" id="198214-SF4416"/>
<dbReference type="GeneID" id="1025413"/>
<dbReference type="KEGG" id="sfl:SF4416"/>
<dbReference type="KEGG" id="sfx:S4687"/>
<dbReference type="PATRIC" id="fig|198214.7.peg.5204"/>
<dbReference type="HOGENOM" id="CLU_068457_2_0_6"/>
<dbReference type="Proteomes" id="UP000001006">
    <property type="component" value="Chromosome"/>
</dbReference>
<dbReference type="Proteomes" id="UP000002673">
    <property type="component" value="Chromosome"/>
</dbReference>
<dbReference type="GO" id="GO:0005829">
    <property type="term" value="C:cytosol"/>
    <property type="evidence" value="ECO:0007669"/>
    <property type="project" value="TreeGrafter"/>
</dbReference>
<dbReference type="GO" id="GO:0004731">
    <property type="term" value="F:purine-nucleoside phosphorylase activity"/>
    <property type="evidence" value="ECO:0007669"/>
    <property type="project" value="UniProtKB-UniRule"/>
</dbReference>
<dbReference type="GO" id="GO:0006152">
    <property type="term" value="P:purine nucleoside catabolic process"/>
    <property type="evidence" value="ECO:0007669"/>
    <property type="project" value="TreeGrafter"/>
</dbReference>
<dbReference type="CDD" id="cd09006">
    <property type="entry name" value="PNP_EcPNPI-like"/>
    <property type="match status" value="1"/>
</dbReference>
<dbReference type="FunFam" id="3.40.50.1580:FF:000002">
    <property type="entry name" value="Purine nucleoside phosphorylase DeoD-type"/>
    <property type="match status" value="1"/>
</dbReference>
<dbReference type="Gene3D" id="3.40.50.1580">
    <property type="entry name" value="Nucleoside phosphorylase domain"/>
    <property type="match status" value="1"/>
</dbReference>
<dbReference type="HAMAP" id="MF_01627">
    <property type="entry name" value="Pur_nucleosid_phosp"/>
    <property type="match status" value="1"/>
</dbReference>
<dbReference type="InterPro" id="IPR004402">
    <property type="entry name" value="DeoD-type"/>
</dbReference>
<dbReference type="InterPro" id="IPR018016">
    <property type="entry name" value="Nucleoside_phosphorylase_CS"/>
</dbReference>
<dbReference type="InterPro" id="IPR000845">
    <property type="entry name" value="Nucleoside_phosphorylase_d"/>
</dbReference>
<dbReference type="InterPro" id="IPR035994">
    <property type="entry name" value="Nucleoside_phosphorylase_sf"/>
</dbReference>
<dbReference type="NCBIfam" id="TIGR00107">
    <property type="entry name" value="deoD"/>
    <property type="match status" value="1"/>
</dbReference>
<dbReference type="NCBIfam" id="NF004489">
    <property type="entry name" value="PRK05819.1"/>
    <property type="match status" value="1"/>
</dbReference>
<dbReference type="NCBIfam" id="NF009914">
    <property type="entry name" value="PRK13374.1"/>
    <property type="match status" value="1"/>
</dbReference>
<dbReference type="PANTHER" id="PTHR43691:SF2">
    <property type="entry name" value="PURINE NUCLEOSIDE PHOSPHORYLASE DEOD-TYPE"/>
    <property type="match status" value="1"/>
</dbReference>
<dbReference type="PANTHER" id="PTHR43691">
    <property type="entry name" value="URIDINE PHOSPHORYLASE"/>
    <property type="match status" value="1"/>
</dbReference>
<dbReference type="Pfam" id="PF01048">
    <property type="entry name" value="PNP_UDP_1"/>
    <property type="match status" value="1"/>
</dbReference>
<dbReference type="SUPFAM" id="SSF53167">
    <property type="entry name" value="Purine and uridine phosphorylases"/>
    <property type="match status" value="1"/>
</dbReference>
<dbReference type="PROSITE" id="PS01232">
    <property type="entry name" value="PNP_UDP_1"/>
    <property type="match status" value="1"/>
</dbReference>
<comment type="function">
    <text evidence="2">Catalyzes the reversible phosphorolytic breakdown of the N-glycosidic bond in the beta-(deoxy)ribonucleoside molecules, with the formation of the corresponding free purine bases and pentose-1-phosphate.</text>
</comment>
<comment type="catalytic activity">
    <reaction evidence="2">
        <text>a purine D-ribonucleoside + phosphate = a purine nucleobase + alpha-D-ribose 1-phosphate</text>
        <dbReference type="Rhea" id="RHEA:19805"/>
        <dbReference type="ChEBI" id="CHEBI:26386"/>
        <dbReference type="ChEBI" id="CHEBI:43474"/>
        <dbReference type="ChEBI" id="CHEBI:57720"/>
        <dbReference type="ChEBI" id="CHEBI:142355"/>
        <dbReference type="EC" id="2.4.2.1"/>
    </reaction>
</comment>
<comment type="catalytic activity">
    <reaction evidence="2">
        <text>a purine 2'-deoxy-D-ribonucleoside + phosphate = a purine nucleobase + 2-deoxy-alpha-D-ribose 1-phosphate</text>
        <dbReference type="Rhea" id="RHEA:36431"/>
        <dbReference type="ChEBI" id="CHEBI:26386"/>
        <dbReference type="ChEBI" id="CHEBI:43474"/>
        <dbReference type="ChEBI" id="CHEBI:57259"/>
        <dbReference type="ChEBI" id="CHEBI:142361"/>
        <dbReference type="EC" id="2.4.2.1"/>
    </reaction>
</comment>
<comment type="subunit">
    <text evidence="2">Homohexamer; trimer of homodimers.</text>
</comment>
<comment type="similarity">
    <text evidence="2">Belongs to the PNP/UDP phosphorylase family.</text>
</comment>
<proteinExistence type="inferred from homology"/>
<sequence length="239" mass="25936">MATPHINAEMGDFADVVLMPGDPLRAKYIAETFLEDAREVNNVRGMLGFTGTYKGRKISVMGHGMGIPSCSIYTKELITDFGVKKIIRVGSCGAVLPHVKLRDVVIGMGACTDSKVNRIRFKDHDFAAIADFDMVRNAVDAAKALGVDARVGNLFSADLFYSPDGEMFDVMEKYGILGVEMEAAGIYGVAAEFGAKALTICTVSDHIRTHEQTTAAERQTTFNDMIKIALESVLLGDKE</sequence>
<reference key="1">
    <citation type="journal article" date="2002" name="Nucleic Acids Res.">
        <title>Genome sequence of Shigella flexneri 2a: insights into pathogenicity through comparison with genomes of Escherichia coli K12 and O157.</title>
        <authorList>
            <person name="Jin Q."/>
            <person name="Yuan Z."/>
            <person name="Xu J."/>
            <person name="Wang Y."/>
            <person name="Shen Y."/>
            <person name="Lu W."/>
            <person name="Wang J."/>
            <person name="Liu H."/>
            <person name="Yang J."/>
            <person name="Yang F."/>
            <person name="Zhang X."/>
            <person name="Zhang J."/>
            <person name="Yang G."/>
            <person name="Wu H."/>
            <person name="Qu D."/>
            <person name="Dong J."/>
            <person name="Sun L."/>
            <person name="Xue Y."/>
            <person name="Zhao A."/>
            <person name="Gao Y."/>
            <person name="Zhu J."/>
            <person name="Kan B."/>
            <person name="Ding K."/>
            <person name="Chen S."/>
            <person name="Cheng H."/>
            <person name="Yao Z."/>
            <person name="He B."/>
            <person name="Chen R."/>
            <person name="Ma D."/>
            <person name="Qiang B."/>
            <person name="Wen Y."/>
            <person name="Hou Y."/>
            <person name="Yu J."/>
        </authorList>
    </citation>
    <scope>NUCLEOTIDE SEQUENCE [LARGE SCALE GENOMIC DNA]</scope>
    <source>
        <strain>301 / Serotype 2a</strain>
    </source>
</reference>
<reference key="2">
    <citation type="journal article" date="2003" name="Infect. Immun.">
        <title>Complete genome sequence and comparative genomics of Shigella flexneri serotype 2a strain 2457T.</title>
        <authorList>
            <person name="Wei J."/>
            <person name="Goldberg M.B."/>
            <person name="Burland V."/>
            <person name="Venkatesan M.M."/>
            <person name="Deng W."/>
            <person name="Fournier G."/>
            <person name="Mayhew G.F."/>
            <person name="Plunkett G. III"/>
            <person name="Rose D.J."/>
            <person name="Darling A."/>
            <person name="Mau B."/>
            <person name="Perna N.T."/>
            <person name="Payne S.M."/>
            <person name="Runyen-Janecky L.J."/>
            <person name="Zhou S."/>
            <person name="Schwartz D.C."/>
            <person name="Blattner F.R."/>
        </authorList>
    </citation>
    <scope>NUCLEOTIDE SEQUENCE [LARGE SCALE GENOMIC DNA]</scope>
    <source>
        <strain>ATCC 700930 / 2457T / Serotype 2a</strain>
    </source>
</reference>
<protein>
    <recommendedName>
        <fullName evidence="2">Purine nucleoside phosphorylase DeoD-type</fullName>
        <shortName evidence="2">PNP</shortName>
        <ecNumber evidence="2">2.4.2.1</ecNumber>
    </recommendedName>
</protein>